<keyword id="KW-0028">Amino-acid biosynthesis</keyword>
<keyword id="KW-0057">Aromatic amino acid biosynthesis</keyword>
<keyword id="KW-0328">Glycosyltransferase</keyword>
<keyword id="KW-0460">Magnesium</keyword>
<keyword id="KW-0479">Metal-binding</keyword>
<keyword id="KW-0808">Transferase</keyword>
<keyword id="KW-0822">Tryptophan biosynthesis</keyword>
<sequence>MADLKPYIAKAASGEPLSLGDAKAAFDIMMSGQATPSQIGGFLMALRVRGETVPEIAGAVASMRSRMIPVIAPDDAMDIVGTGGDQSGSYNVSSCTAFVVAGAGVPVAKHGNRALSSRSGAADTLAALGINIEADADTIGRSISEAGLGFMFAPMHHSAMRHVGPSRVELGTRTIFNLLGPLSNPASVKRQLVGVFAPQWLEPLAHVLKELGSETAWVVYGDGLDEMTTAGTTQVAALENGQIRTFEITPEEVGLRRCSPAELKGGEAAENAKALLGVLEDKDSAYRDIVLLNSGAALVVAGKAENLKDGIAQAVQSIDSGAALAVLQKVIAVSNDKPA</sequence>
<proteinExistence type="inferred from homology"/>
<protein>
    <recommendedName>
        <fullName evidence="1">Anthranilate phosphoribosyltransferase</fullName>
        <ecNumber evidence="1">2.4.2.18</ecNumber>
    </recommendedName>
</protein>
<accession>B0CGT8</accession>
<comment type="function">
    <text evidence="1">Catalyzes the transfer of the phosphoribosyl group of 5-phosphorylribose-1-pyrophosphate (PRPP) to anthranilate to yield N-(5'-phosphoribosyl)-anthranilate (PRA).</text>
</comment>
<comment type="catalytic activity">
    <reaction evidence="1">
        <text>N-(5-phospho-beta-D-ribosyl)anthranilate + diphosphate = 5-phospho-alpha-D-ribose 1-diphosphate + anthranilate</text>
        <dbReference type="Rhea" id="RHEA:11768"/>
        <dbReference type="ChEBI" id="CHEBI:16567"/>
        <dbReference type="ChEBI" id="CHEBI:18277"/>
        <dbReference type="ChEBI" id="CHEBI:33019"/>
        <dbReference type="ChEBI" id="CHEBI:58017"/>
        <dbReference type="EC" id="2.4.2.18"/>
    </reaction>
</comment>
<comment type="cofactor">
    <cofactor evidence="1">
        <name>Mg(2+)</name>
        <dbReference type="ChEBI" id="CHEBI:18420"/>
    </cofactor>
    <text evidence="1">Binds 2 magnesium ions per monomer.</text>
</comment>
<comment type="pathway">
    <text evidence="1">Amino-acid biosynthesis; L-tryptophan biosynthesis; L-tryptophan from chorismate: step 2/5.</text>
</comment>
<comment type="subunit">
    <text evidence="1">Homodimer.</text>
</comment>
<comment type="similarity">
    <text evidence="1">Belongs to the anthranilate phosphoribosyltransferase family.</text>
</comment>
<reference key="1">
    <citation type="submission" date="2007-12" db="EMBL/GenBank/DDBJ databases">
        <title>Brucella suis ATCC 23445 whole genome shotgun sequencing project.</title>
        <authorList>
            <person name="Setubal J.C."/>
            <person name="Bowns C."/>
            <person name="Boyle S."/>
            <person name="Crasta O.R."/>
            <person name="Czar M.J."/>
            <person name="Dharmanolla C."/>
            <person name="Gillespie J.J."/>
            <person name="Kenyon R.W."/>
            <person name="Lu J."/>
            <person name="Mane S."/>
            <person name="Mohapatra S."/>
            <person name="Nagrani S."/>
            <person name="Purkayastha A."/>
            <person name="Rajasimha H.K."/>
            <person name="Shallom J.M."/>
            <person name="Shallom S."/>
            <person name="Shukla M."/>
            <person name="Snyder E.E."/>
            <person name="Sobral B.W."/>
            <person name="Wattam A.R."/>
            <person name="Will R."/>
            <person name="Williams K."/>
            <person name="Yoo H."/>
            <person name="Bruce D."/>
            <person name="Detter C."/>
            <person name="Munk C."/>
            <person name="Brettin T.S."/>
        </authorList>
    </citation>
    <scope>NUCLEOTIDE SEQUENCE [LARGE SCALE GENOMIC DNA]</scope>
    <source>
        <strain>ATCC 23445 / NCTC 10510</strain>
    </source>
</reference>
<feature type="chain" id="PRO_1000078006" description="Anthranilate phosphoribosyltransferase">
    <location>
        <begin position="1"/>
        <end position="339"/>
    </location>
</feature>
<feature type="binding site" evidence="1">
    <location>
        <position position="81"/>
    </location>
    <ligand>
        <name>5-phospho-alpha-D-ribose 1-diphosphate</name>
        <dbReference type="ChEBI" id="CHEBI:58017"/>
    </ligand>
</feature>
<feature type="binding site" evidence="1">
    <location>
        <position position="81"/>
    </location>
    <ligand>
        <name>anthranilate</name>
        <dbReference type="ChEBI" id="CHEBI:16567"/>
        <label>1</label>
    </ligand>
</feature>
<feature type="binding site" evidence="1">
    <location>
        <begin position="84"/>
        <end position="85"/>
    </location>
    <ligand>
        <name>5-phospho-alpha-D-ribose 1-diphosphate</name>
        <dbReference type="ChEBI" id="CHEBI:58017"/>
    </ligand>
</feature>
<feature type="binding site" evidence="1">
    <location>
        <position position="89"/>
    </location>
    <ligand>
        <name>5-phospho-alpha-D-ribose 1-diphosphate</name>
        <dbReference type="ChEBI" id="CHEBI:58017"/>
    </ligand>
</feature>
<feature type="binding site" evidence="1">
    <location>
        <begin position="91"/>
        <end position="94"/>
    </location>
    <ligand>
        <name>5-phospho-alpha-D-ribose 1-diphosphate</name>
        <dbReference type="ChEBI" id="CHEBI:58017"/>
    </ligand>
</feature>
<feature type="binding site" evidence="1">
    <location>
        <position position="93"/>
    </location>
    <ligand>
        <name>Mg(2+)</name>
        <dbReference type="ChEBI" id="CHEBI:18420"/>
        <label>1</label>
    </ligand>
</feature>
<feature type="binding site" evidence="1">
    <location>
        <begin position="109"/>
        <end position="117"/>
    </location>
    <ligand>
        <name>5-phospho-alpha-D-ribose 1-diphosphate</name>
        <dbReference type="ChEBI" id="CHEBI:58017"/>
    </ligand>
</feature>
<feature type="binding site" evidence="1">
    <location>
        <position position="112"/>
    </location>
    <ligand>
        <name>anthranilate</name>
        <dbReference type="ChEBI" id="CHEBI:16567"/>
        <label>1</label>
    </ligand>
</feature>
<feature type="binding site" evidence="1">
    <location>
        <position position="121"/>
    </location>
    <ligand>
        <name>5-phospho-alpha-D-ribose 1-diphosphate</name>
        <dbReference type="ChEBI" id="CHEBI:58017"/>
    </ligand>
</feature>
<feature type="binding site" evidence="1">
    <location>
        <position position="167"/>
    </location>
    <ligand>
        <name>anthranilate</name>
        <dbReference type="ChEBI" id="CHEBI:16567"/>
        <label>2</label>
    </ligand>
</feature>
<feature type="binding site" evidence="1">
    <location>
        <position position="225"/>
    </location>
    <ligand>
        <name>Mg(2+)</name>
        <dbReference type="ChEBI" id="CHEBI:18420"/>
        <label>2</label>
    </ligand>
</feature>
<feature type="binding site" evidence="1">
    <location>
        <position position="226"/>
    </location>
    <ligand>
        <name>Mg(2+)</name>
        <dbReference type="ChEBI" id="CHEBI:18420"/>
        <label>1</label>
    </ligand>
</feature>
<feature type="binding site" evidence="1">
    <location>
        <position position="226"/>
    </location>
    <ligand>
        <name>Mg(2+)</name>
        <dbReference type="ChEBI" id="CHEBI:18420"/>
        <label>2</label>
    </ligand>
</feature>
<dbReference type="EC" id="2.4.2.18" evidence="1"/>
<dbReference type="EMBL" id="CP000911">
    <property type="protein sequence ID" value="ABY38239.1"/>
    <property type="molecule type" value="Genomic_DNA"/>
</dbReference>
<dbReference type="RefSeq" id="WP_006070885.1">
    <property type="nucleotide sequence ID" value="NC_010169.1"/>
</dbReference>
<dbReference type="SMR" id="B0CGT8"/>
<dbReference type="KEGG" id="bmt:BSUIS_A1188"/>
<dbReference type="HOGENOM" id="CLU_034315_2_1_5"/>
<dbReference type="UniPathway" id="UPA00035">
    <property type="reaction ID" value="UER00041"/>
</dbReference>
<dbReference type="Proteomes" id="UP000008545">
    <property type="component" value="Chromosome I"/>
</dbReference>
<dbReference type="GO" id="GO:0005829">
    <property type="term" value="C:cytosol"/>
    <property type="evidence" value="ECO:0007669"/>
    <property type="project" value="TreeGrafter"/>
</dbReference>
<dbReference type="GO" id="GO:0004048">
    <property type="term" value="F:anthranilate phosphoribosyltransferase activity"/>
    <property type="evidence" value="ECO:0007669"/>
    <property type="project" value="UniProtKB-UniRule"/>
</dbReference>
<dbReference type="GO" id="GO:0000287">
    <property type="term" value="F:magnesium ion binding"/>
    <property type="evidence" value="ECO:0007669"/>
    <property type="project" value="UniProtKB-UniRule"/>
</dbReference>
<dbReference type="GO" id="GO:0000162">
    <property type="term" value="P:L-tryptophan biosynthetic process"/>
    <property type="evidence" value="ECO:0007669"/>
    <property type="project" value="UniProtKB-UniRule"/>
</dbReference>
<dbReference type="FunFam" id="3.40.1030.10:FF:000002">
    <property type="entry name" value="Anthranilate phosphoribosyltransferase"/>
    <property type="match status" value="1"/>
</dbReference>
<dbReference type="Gene3D" id="3.40.1030.10">
    <property type="entry name" value="Nucleoside phosphorylase/phosphoribosyltransferase catalytic domain"/>
    <property type="match status" value="1"/>
</dbReference>
<dbReference type="Gene3D" id="1.20.970.10">
    <property type="entry name" value="Transferase, Pyrimidine Nucleoside Phosphorylase, Chain C"/>
    <property type="match status" value="1"/>
</dbReference>
<dbReference type="HAMAP" id="MF_00211">
    <property type="entry name" value="TrpD"/>
    <property type="match status" value="1"/>
</dbReference>
<dbReference type="InterPro" id="IPR005940">
    <property type="entry name" value="Anthranilate_Pribosyl_Tfrase"/>
</dbReference>
<dbReference type="InterPro" id="IPR000312">
    <property type="entry name" value="Glycosyl_Trfase_fam3"/>
</dbReference>
<dbReference type="InterPro" id="IPR017459">
    <property type="entry name" value="Glycosyl_Trfase_fam3_N_dom"/>
</dbReference>
<dbReference type="InterPro" id="IPR036320">
    <property type="entry name" value="Glycosyl_Trfase_fam3_N_dom_sf"/>
</dbReference>
<dbReference type="InterPro" id="IPR035902">
    <property type="entry name" value="Nuc_phospho_transferase"/>
</dbReference>
<dbReference type="NCBIfam" id="TIGR01245">
    <property type="entry name" value="trpD"/>
    <property type="match status" value="1"/>
</dbReference>
<dbReference type="PANTHER" id="PTHR43285">
    <property type="entry name" value="ANTHRANILATE PHOSPHORIBOSYLTRANSFERASE"/>
    <property type="match status" value="1"/>
</dbReference>
<dbReference type="PANTHER" id="PTHR43285:SF2">
    <property type="entry name" value="ANTHRANILATE PHOSPHORIBOSYLTRANSFERASE"/>
    <property type="match status" value="1"/>
</dbReference>
<dbReference type="Pfam" id="PF02885">
    <property type="entry name" value="Glycos_trans_3N"/>
    <property type="match status" value="1"/>
</dbReference>
<dbReference type="Pfam" id="PF00591">
    <property type="entry name" value="Glycos_transf_3"/>
    <property type="match status" value="1"/>
</dbReference>
<dbReference type="SUPFAM" id="SSF52418">
    <property type="entry name" value="Nucleoside phosphorylase/phosphoribosyltransferase catalytic domain"/>
    <property type="match status" value="1"/>
</dbReference>
<dbReference type="SUPFAM" id="SSF47648">
    <property type="entry name" value="Nucleoside phosphorylase/phosphoribosyltransferase N-terminal domain"/>
    <property type="match status" value="1"/>
</dbReference>
<organism>
    <name type="scientific">Brucella suis (strain ATCC 23445 / NCTC 10510)</name>
    <dbReference type="NCBI Taxonomy" id="470137"/>
    <lineage>
        <taxon>Bacteria</taxon>
        <taxon>Pseudomonadati</taxon>
        <taxon>Pseudomonadota</taxon>
        <taxon>Alphaproteobacteria</taxon>
        <taxon>Hyphomicrobiales</taxon>
        <taxon>Brucellaceae</taxon>
        <taxon>Brucella/Ochrobactrum group</taxon>
        <taxon>Brucella</taxon>
    </lineage>
</organism>
<name>TRPD_BRUSI</name>
<evidence type="ECO:0000255" key="1">
    <source>
        <dbReference type="HAMAP-Rule" id="MF_00211"/>
    </source>
</evidence>
<gene>
    <name evidence="1" type="primary">trpD</name>
    <name type="ordered locus">BSUIS_A1188</name>
</gene>